<sequence>MNAPEILNGAATASPADATEATQTAARAKTPLTRREQKEAYENNKLFKRLARQVGEAIVDFNMIENGDKVMVCLSGGKDSYAMLEILMRLRERAPINFDIVAVNLDQKQPGFPEHVLPEYLKQLDIPFHIENQDTYSIVKRLVPEGKTTCSLCSRLRRGILYRVAGELGATKIALGHHRDDILQTLLLNMFYGGKLKGMPPKLQSDDGKNIVIRPLAYVKETDLEKYAELREFPIIPCNLCGSQPNLKRAEMKALVRDWEKRFPGRIENMFNALSNVVPSHLMDHKLFPFAGLRATGEADPQGDIAFDEEPCSTDAAEGAMPGATKSISIVQFDDL</sequence>
<dbReference type="EC" id="2.8.1.-" evidence="1"/>
<dbReference type="EMBL" id="CP001052">
    <property type="protein sequence ID" value="ACD18118.1"/>
    <property type="molecule type" value="Genomic_DNA"/>
</dbReference>
<dbReference type="RefSeq" id="WP_012434646.1">
    <property type="nucleotide sequence ID" value="NC_010681.1"/>
</dbReference>
<dbReference type="SMR" id="B2T6U6"/>
<dbReference type="STRING" id="398527.Bphyt_3730"/>
<dbReference type="KEGG" id="bpy:Bphyt_3730"/>
<dbReference type="eggNOG" id="COG0037">
    <property type="taxonomic scope" value="Bacteria"/>
</dbReference>
<dbReference type="HOGENOM" id="CLU_026481_0_0_4"/>
<dbReference type="OrthoDB" id="9801054at2"/>
<dbReference type="Proteomes" id="UP000001739">
    <property type="component" value="Chromosome 1"/>
</dbReference>
<dbReference type="GO" id="GO:0005737">
    <property type="term" value="C:cytoplasm"/>
    <property type="evidence" value="ECO:0007669"/>
    <property type="project" value="UniProtKB-SubCell"/>
</dbReference>
<dbReference type="GO" id="GO:0051539">
    <property type="term" value="F:4 iron, 4 sulfur cluster binding"/>
    <property type="evidence" value="ECO:0007669"/>
    <property type="project" value="UniProtKB-UniRule"/>
</dbReference>
<dbReference type="GO" id="GO:0005524">
    <property type="term" value="F:ATP binding"/>
    <property type="evidence" value="ECO:0007669"/>
    <property type="project" value="UniProtKB-UniRule"/>
</dbReference>
<dbReference type="GO" id="GO:0000287">
    <property type="term" value="F:magnesium ion binding"/>
    <property type="evidence" value="ECO:0007669"/>
    <property type="project" value="UniProtKB-UniRule"/>
</dbReference>
<dbReference type="GO" id="GO:0016783">
    <property type="term" value="F:sulfurtransferase activity"/>
    <property type="evidence" value="ECO:0007669"/>
    <property type="project" value="UniProtKB-UniRule"/>
</dbReference>
<dbReference type="GO" id="GO:0000049">
    <property type="term" value="F:tRNA binding"/>
    <property type="evidence" value="ECO:0007669"/>
    <property type="project" value="UniProtKB-KW"/>
</dbReference>
<dbReference type="GO" id="GO:0034227">
    <property type="term" value="P:tRNA thio-modification"/>
    <property type="evidence" value="ECO:0007669"/>
    <property type="project" value="UniProtKB-UniRule"/>
</dbReference>
<dbReference type="CDD" id="cd24138">
    <property type="entry name" value="TtcA-like"/>
    <property type="match status" value="1"/>
</dbReference>
<dbReference type="Gene3D" id="3.40.50.620">
    <property type="entry name" value="HUPs"/>
    <property type="match status" value="1"/>
</dbReference>
<dbReference type="HAMAP" id="MF_01850">
    <property type="entry name" value="TtcA"/>
    <property type="match status" value="1"/>
</dbReference>
<dbReference type="InterPro" id="IPR014729">
    <property type="entry name" value="Rossmann-like_a/b/a_fold"/>
</dbReference>
<dbReference type="InterPro" id="IPR011063">
    <property type="entry name" value="TilS/TtcA_N"/>
</dbReference>
<dbReference type="InterPro" id="IPR012089">
    <property type="entry name" value="tRNA_Cyd_32_2_STrfase"/>
</dbReference>
<dbReference type="NCBIfam" id="NF007972">
    <property type="entry name" value="PRK10696.1"/>
    <property type="match status" value="1"/>
</dbReference>
<dbReference type="PANTHER" id="PTHR43686:SF1">
    <property type="entry name" value="AMINOTRAN_5 DOMAIN-CONTAINING PROTEIN"/>
    <property type="match status" value="1"/>
</dbReference>
<dbReference type="PANTHER" id="PTHR43686">
    <property type="entry name" value="SULFURTRANSFERASE-RELATED"/>
    <property type="match status" value="1"/>
</dbReference>
<dbReference type="Pfam" id="PF01171">
    <property type="entry name" value="ATP_bind_3"/>
    <property type="match status" value="1"/>
</dbReference>
<dbReference type="SUPFAM" id="SSF52402">
    <property type="entry name" value="Adenine nucleotide alpha hydrolases-like"/>
    <property type="match status" value="1"/>
</dbReference>
<evidence type="ECO:0000255" key="1">
    <source>
        <dbReference type="HAMAP-Rule" id="MF_01850"/>
    </source>
</evidence>
<evidence type="ECO:0000256" key="2">
    <source>
        <dbReference type="SAM" id="MobiDB-lite"/>
    </source>
</evidence>
<keyword id="KW-0004">4Fe-4S</keyword>
<keyword id="KW-0067">ATP-binding</keyword>
<keyword id="KW-0963">Cytoplasm</keyword>
<keyword id="KW-0408">Iron</keyword>
<keyword id="KW-0411">Iron-sulfur</keyword>
<keyword id="KW-0460">Magnesium</keyword>
<keyword id="KW-0479">Metal-binding</keyword>
<keyword id="KW-0547">Nucleotide-binding</keyword>
<keyword id="KW-0694">RNA-binding</keyword>
<keyword id="KW-0808">Transferase</keyword>
<keyword id="KW-0819">tRNA processing</keyword>
<keyword id="KW-0820">tRNA-binding</keyword>
<comment type="function">
    <text evidence="1">Catalyzes the ATP-dependent 2-thiolation of cytidine in position 32 of tRNA, to form 2-thiocytidine (s(2)C32). The sulfur atoms are provided by the cysteine/cysteine desulfurase (IscS) system.</text>
</comment>
<comment type="catalytic activity">
    <reaction evidence="1">
        <text>cytidine(32) in tRNA + S-sulfanyl-L-cysteinyl-[cysteine desulfurase] + AH2 + ATP = 2-thiocytidine(32) in tRNA + L-cysteinyl-[cysteine desulfurase] + A + AMP + diphosphate + H(+)</text>
        <dbReference type="Rhea" id="RHEA:57048"/>
        <dbReference type="Rhea" id="RHEA-COMP:10288"/>
        <dbReference type="Rhea" id="RHEA-COMP:12157"/>
        <dbReference type="Rhea" id="RHEA-COMP:12158"/>
        <dbReference type="Rhea" id="RHEA-COMP:14821"/>
        <dbReference type="ChEBI" id="CHEBI:13193"/>
        <dbReference type="ChEBI" id="CHEBI:15378"/>
        <dbReference type="ChEBI" id="CHEBI:17499"/>
        <dbReference type="ChEBI" id="CHEBI:29950"/>
        <dbReference type="ChEBI" id="CHEBI:30616"/>
        <dbReference type="ChEBI" id="CHEBI:33019"/>
        <dbReference type="ChEBI" id="CHEBI:61963"/>
        <dbReference type="ChEBI" id="CHEBI:82748"/>
        <dbReference type="ChEBI" id="CHEBI:141453"/>
        <dbReference type="ChEBI" id="CHEBI:456215"/>
    </reaction>
    <physiologicalReaction direction="left-to-right" evidence="1">
        <dbReference type="Rhea" id="RHEA:57049"/>
    </physiologicalReaction>
</comment>
<comment type="cofactor">
    <cofactor evidence="1">
        <name>Mg(2+)</name>
        <dbReference type="ChEBI" id="CHEBI:18420"/>
    </cofactor>
</comment>
<comment type="cofactor">
    <cofactor evidence="1">
        <name>[4Fe-4S] cluster</name>
        <dbReference type="ChEBI" id="CHEBI:49883"/>
    </cofactor>
    <text evidence="1">Binds 1 [4Fe-4S] cluster per subunit. The cluster is chelated by three Cys residues, the fourth Fe has a free coordination site that may bind a sulfur atom transferred from the persulfide of IscS.</text>
</comment>
<comment type="pathway">
    <text evidence="1">tRNA modification.</text>
</comment>
<comment type="subunit">
    <text evidence="1">Homodimer.</text>
</comment>
<comment type="subcellular location">
    <subcellularLocation>
        <location evidence="1">Cytoplasm</location>
    </subcellularLocation>
</comment>
<comment type="miscellaneous">
    <text evidence="1">The thiolation reaction likely consists of two steps: a first activation step by ATP to form an adenylated intermediate of the target base of tRNA, and a second nucleophilic substitution step of the sulfur (S) atom supplied by the hydrosulfide attached to the Fe-S cluster.</text>
</comment>
<comment type="similarity">
    <text evidence="1">Belongs to the TtcA family.</text>
</comment>
<accession>B2T6U6</accession>
<name>TTCA_PARPJ</name>
<feature type="chain" id="PRO_0000348690" description="tRNA-cytidine(32) 2-sulfurtransferase">
    <location>
        <begin position="1"/>
        <end position="336"/>
    </location>
</feature>
<feature type="region of interest" description="Disordered" evidence="2">
    <location>
        <begin position="1"/>
        <end position="34"/>
    </location>
</feature>
<feature type="short sequence motif" description="PP-loop motif" evidence="1">
    <location>
        <begin position="75"/>
        <end position="80"/>
    </location>
</feature>
<feature type="compositionally biased region" description="Low complexity" evidence="2">
    <location>
        <begin position="10"/>
        <end position="22"/>
    </location>
</feature>
<feature type="binding site" evidence="1">
    <location>
        <position position="150"/>
    </location>
    <ligand>
        <name>[4Fe-4S] cluster</name>
        <dbReference type="ChEBI" id="CHEBI:49883"/>
    </ligand>
</feature>
<feature type="binding site" evidence="1">
    <location>
        <position position="153"/>
    </location>
    <ligand>
        <name>[4Fe-4S] cluster</name>
        <dbReference type="ChEBI" id="CHEBI:49883"/>
    </ligand>
</feature>
<feature type="binding site" evidence="1">
    <location>
        <position position="241"/>
    </location>
    <ligand>
        <name>[4Fe-4S] cluster</name>
        <dbReference type="ChEBI" id="CHEBI:49883"/>
    </ligand>
</feature>
<protein>
    <recommendedName>
        <fullName evidence="1">tRNA-cytidine(32) 2-sulfurtransferase</fullName>
        <ecNumber evidence="1">2.8.1.-</ecNumber>
    </recommendedName>
    <alternativeName>
        <fullName evidence="1">Two-thiocytidine biosynthesis protein A</fullName>
    </alternativeName>
    <alternativeName>
        <fullName evidence="1">tRNA 2-thiocytidine biosynthesis protein TtcA</fullName>
    </alternativeName>
</protein>
<organism>
    <name type="scientific">Paraburkholderia phytofirmans (strain DSM 17436 / LMG 22146 / PsJN)</name>
    <name type="common">Burkholderia phytofirmans</name>
    <dbReference type="NCBI Taxonomy" id="398527"/>
    <lineage>
        <taxon>Bacteria</taxon>
        <taxon>Pseudomonadati</taxon>
        <taxon>Pseudomonadota</taxon>
        <taxon>Betaproteobacteria</taxon>
        <taxon>Burkholderiales</taxon>
        <taxon>Burkholderiaceae</taxon>
        <taxon>Paraburkholderia</taxon>
    </lineage>
</organism>
<proteinExistence type="inferred from homology"/>
<gene>
    <name evidence="1" type="primary">ttcA</name>
    <name type="ordered locus">Bphyt_3730</name>
</gene>
<reference key="1">
    <citation type="journal article" date="2011" name="J. Bacteriol.">
        <title>Complete genome sequence of the plant growth-promoting endophyte Burkholderia phytofirmans strain PsJN.</title>
        <authorList>
            <person name="Weilharter A."/>
            <person name="Mitter B."/>
            <person name="Shin M.V."/>
            <person name="Chain P.S."/>
            <person name="Nowak J."/>
            <person name="Sessitsch A."/>
        </authorList>
    </citation>
    <scope>NUCLEOTIDE SEQUENCE [LARGE SCALE GENOMIC DNA]</scope>
    <source>
        <strain>DSM 17436 / LMG 22146 / PsJN</strain>
    </source>
</reference>